<accession>Q6BZF9</accession>
<feature type="chain" id="PRO_0000227900" description="Adenine phosphoribosyltransferase">
    <location>
        <begin position="1"/>
        <end position="186"/>
    </location>
</feature>
<feature type="binding site" evidence="1">
    <location>
        <begin position="132"/>
        <end position="136"/>
    </location>
    <ligand>
        <name>AMP</name>
        <dbReference type="ChEBI" id="CHEBI:456215"/>
    </ligand>
</feature>
<proteinExistence type="inferred from homology"/>
<protein>
    <recommendedName>
        <fullName>Adenine phosphoribosyltransferase</fullName>
        <shortName>APRT</shortName>
        <ecNumber>2.4.2.7</ecNumber>
    </recommendedName>
</protein>
<sequence length="186" mass="20387">MSQVEISELAKEIRASLKQFPNFPSEGILFEDFLPVFTKPDLFQKLVRAFQLHVGEQKVDYVVGLESRGFLFGPTLALALGAGFVPVRKAGKLPGPVFTAEFQKEYGSDKFQIQKDVIEEGAKVLIVDDILATGGSASSAGELVKQTGGDIVEYLFVMELDFLNGRDKLDKPAFTLLSGQAEKLQN</sequence>
<comment type="function">
    <text evidence="1">Catalyzes a salvage reaction resulting in the formation of AMP, that is energically less costly than de novo synthesis.</text>
</comment>
<comment type="catalytic activity">
    <reaction>
        <text>AMP + diphosphate = 5-phospho-alpha-D-ribose 1-diphosphate + adenine</text>
        <dbReference type="Rhea" id="RHEA:16609"/>
        <dbReference type="ChEBI" id="CHEBI:16708"/>
        <dbReference type="ChEBI" id="CHEBI:33019"/>
        <dbReference type="ChEBI" id="CHEBI:58017"/>
        <dbReference type="ChEBI" id="CHEBI:456215"/>
        <dbReference type="EC" id="2.4.2.7"/>
    </reaction>
</comment>
<comment type="cofactor">
    <cofactor evidence="1">
        <name>Mg(2+)</name>
        <dbReference type="ChEBI" id="CHEBI:18420"/>
    </cofactor>
</comment>
<comment type="pathway">
    <text>Purine metabolism; AMP biosynthesis via salvage pathway; AMP from adenine: step 1/1.</text>
</comment>
<comment type="subunit">
    <text evidence="1">Homodimer.</text>
</comment>
<comment type="subcellular location">
    <subcellularLocation>
        <location evidence="1">Cytoplasm</location>
    </subcellularLocation>
    <subcellularLocation>
        <location evidence="1">Nucleus</location>
    </subcellularLocation>
</comment>
<comment type="similarity">
    <text evidence="2">Belongs to the purine/pyrimidine phosphoribosyltransferase family.</text>
</comment>
<evidence type="ECO:0000250" key="1"/>
<evidence type="ECO:0000305" key="2"/>
<reference key="1">
    <citation type="journal article" date="2004" name="Nature">
        <title>Genome evolution in yeasts.</title>
        <authorList>
            <person name="Dujon B."/>
            <person name="Sherman D."/>
            <person name="Fischer G."/>
            <person name="Durrens P."/>
            <person name="Casaregola S."/>
            <person name="Lafontaine I."/>
            <person name="de Montigny J."/>
            <person name="Marck C."/>
            <person name="Neuveglise C."/>
            <person name="Talla E."/>
            <person name="Goffard N."/>
            <person name="Frangeul L."/>
            <person name="Aigle M."/>
            <person name="Anthouard V."/>
            <person name="Babour A."/>
            <person name="Barbe V."/>
            <person name="Barnay S."/>
            <person name="Blanchin S."/>
            <person name="Beckerich J.-M."/>
            <person name="Beyne E."/>
            <person name="Bleykasten C."/>
            <person name="Boisrame A."/>
            <person name="Boyer J."/>
            <person name="Cattolico L."/>
            <person name="Confanioleri F."/>
            <person name="de Daruvar A."/>
            <person name="Despons L."/>
            <person name="Fabre E."/>
            <person name="Fairhead C."/>
            <person name="Ferry-Dumazet H."/>
            <person name="Groppi A."/>
            <person name="Hantraye F."/>
            <person name="Hennequin C."/>
            <person name="Jauniaux N."/>
            <person name="Joyet P."/>
            <person name="Kachouri R."/>
            <person name="Kerrest A."/>
            <person name="Koszul R."/>
            <person name="Lemaire M."/>
            <person name="Lesur I."/>
            <person name="Ma L."/>
            <person name="Muller H."/>
            <person name="Nicaud J.-M."/>
            <person name="Nikolski M."/>
            <person name="Oztas S."/>
            <person name="Ozier-Kalogeropoulos O."/>
            <person name="Pellenz S."/>
            <person name="Potier S."/>
            <person name="Richard G.-F."/>
            <person name="Straub M.-L."/>
            <person name="Suleau A."/>
            <person name="Swennen D."/>
            <person name="Tekaia F."/>
            <person name="Wesolowski-Louvel M."/>
            <person name="Westhof E."/>
            <person name="Wirth B."/>
            <person name="Zeniou-Meyer M."/>
            <person name="Zivanovic Y."/>
            <person name="Bolotin-Fukuhara M."/>
            <person name="Thierry A."/>
            <person name="Bouchier C."/>
            <person name="Caudron B."/>
            <person name="Scarpelli C."/>
            <person name="Gaillardin C."/>
            <person name="Weissenbach J."/>
            <person name="Wincker P."/>
            <person name="Souciet J.-L."/>
        </authorList>
    </citation>
    <scope>NUCLEOTIDE SEQUENCE [LARGE SCALE GENOMIC DNA]</scope>
    <source>
        <strain>ATCC 36239 / CBS 767 / BCRC 21394 / JCM 1990 / NBRC 0083 / IGC 2968</strain>
    </source>
</reference>
<name>APT_DEBHA</name>
<gene>
    <name type="primary">APT1</name>
    <name type="ordered locus">DEHA2A01650g</name>
</gene>
<dbReference type="EC" id="2.4.2.7"/>
<dbReference type="EMBL" id="CR382133">
    <property type="protein sequence ID" value="CAG84362.1"/>
    <property type="molecule type" value="Genomic_DNA"/>
</dbReference>
<dbReference type="RefSeq" id="XP_456410.1">
    <property type="nucleotide sequence ID" value="XM_456410.1"/>
</dbReference>
<dbReference type="SMR" id="Q6BZF9"/>
<dbReference type="FunCoup" id="Q6BZF9">
    <property type="interactions" value="583"/>
</dbReference>
<dbReference type="STRING" id="284592.Q6BZF9"/>
<dbReference type="GeneID" id="2899963"/>
<dbReference type="KEGG" id="dha:DEHA2A01650g"/>
<dbReference type="VEuPathDB" id="FungiDB:DEHA2A01650g"/>
<dbReference type="eggNOG" id="KOG1712">
    <property type="taxonomic scope" value="Eukaryota"/>
</dbReference>
<dbReference type="HOGENOM" id="CLU_063339_1_0_1"/>
<dbReference type="InParanoid" id="Q6BZF9"/>
<dbReference type="OMA" id="QAYDLEY"/>
<dbReference type="OrthoDB" id="363185at2759"/>
<dbReference type="UniPathway" id="UPA00588">
    <property type="reaction ID" value="UER00646"/>
</dbReference>
<dbReference type="Proteomes" id="UP000000599">
    <property type="component" value="Chromosome A"/>
</dbReference>
<dbReference type="GO" id="GO:0005737">
    <property type="term" value="C:cytoplasm"/>
    <property type="evidence" value="ECO:0007669"/>
    <property type="project" value="UniProtKB-SubCell"/>
</dbReference>
<dbReference type="GO" id="GO:0005634">
    <property type="term" value="C:nucleus"/>
    <property type="evidence" value="ECO:0007669"/>
    <property type="project" value="UniProtKB-SubCell"/>
</dbReference>
<dbReference type="GO" id="GO:0002055">
    <property type="term" value="F:adenine binding"/>
    <property type="evidence" value="ECO:0007669"/>
    <property type="project" value="TreeGrafter"/>
</dbReference>
<dbReference type="GO" id="GO:0003999">
    <property type="term" value="F:adenine phosphoribosyltransferase activity"/>
    <property type="evidence" value="ECO:0007669"/>
    <property type="project" value="UniProtKB-EC"/>
</dbReference>
<dbReference type="GO" id="GO:0016208">
    <property type="term" value="F:AMP binding"/>
    <property type="evidence" value="ECO:0007669"/>
    <property type="project" value="TreeGrafter"/>
</dbReference>
<dbReference type="GO" id="GO:0046872">
    <property type="term" value="F:metal ion binding"/>
    <property type="evidence" value="ECO:0007669"/>
    <property type="project" value="UniProtKB-KW"/>
</dbReference>
<dbReference type="GO" id="GO:0006168">
    <property type="term" value="P:adenine salvage"/>
    <property type="evidence" value="ECO:0007669"/>
    <property type="project" value="InterPro"/>
</dbReference>
<dbReference type="GO" id="GO:0044209">
    <property type="term" value="P:AMP salvage"/>
    <property type="evidence" value="ECO:0007669"/>
    <property type="project" value="UniProtKB-UniPathway"/>
</dbReference>
<dbReference type="GO" id="GO:0006166">
    <property type="term" value="P:purine ribonucleoside salvage"/>
    <property type="evidence" value="ECO:0007669"/>
    <property type="project" value="UniProtKB-KW"/>
</dbReference>
<dbReference type="CDD" id="cd06223">
    <property type="entry name" value="PRTases_typeI"/>
    <property type="match status" value="1"/>
</dbReference>
<dbReference type="FunFam" id="3.40.50.2020:FF:000004">
    <property type="entry name" value="Adenine phosphoribosyltransferase"/>
    <property type="match status" value="1"/>
</dbReference>
<dbReference type="Gene3D" id="3.40.50.2020">
    <property type="match status" value="1"/>
</dbReference>
<dbReference type="HAMAP" id="MF_00004">
    <property type="entry name" value="Aden_phosphoribosyltr"/>
    <property type="match status" value="1"/>
</dbReference>
<dbReference type="InterPro" id="IPR005764">
    <property type="entry name" value="Ade_phspho_trans"/>
</dbReference>
<dbReference type="InterPro" id="IPR000836">
    <property type="entry name" value="PRibTrfase_dom"/>
</dbReference>
<dbReference type="InterPro" id="IPR029057">
    <property type="entry name" value="PRTase-like"/>
</dbReference>
<dbReference type="InterPro" id="IPR050054">
    <property type="entry name" value="UPRTase/APRTase"/>
</dbReference>
<dbReference type="NCBIfam" id="TIGR01090">
    <property type="entry name" value="apt"/>
    <property type="match status" value="1"/>
</dbReference>
<dbReference type="NCBIfam" id="NF002636">
    <property type="entry name" value="PRK02304.1-5"/>
    <property type="match status" value="1"/>
</dbReference>
<dbReference type="PANTHER" id="PTHR32315">
    <property type="entry name" value="ADENINE PHOSPHORIBOSYLTRANSFERASE"/>
    <property type="match status" value="1"/>
</dbReference>
<dbReference type="PANTHER" id="PTHR32315:SF3">
    <property type="entry name" value="ADENINE PHOSPHORIBOSYLTRANSFERASE"/>
    <property type="match status" value="1"/>
</dbReference>
<dbReference type="Pfam" id="PF00156">
    <property type="entry name" value="Pribosyltran"/>
    <property type="match status" value="1"/>
</dbReference>
<dbReference type="SUPFAM" id="SSF53271">
    <property type="entry name" value="PRTase-like"/>
    <property type="match status" value="1"/>
</dbReference>
<dbReference type="PROSITE" id="PS00103">
    <property type="entry name" value="PUR_PYR_PR_TRANSFER"/>
    <property type="match status" value="1"/>
</dbReference>
<organism>
    <name type="scientific">Debaryomyces hansenii (strain ATCC 36239 / CBS 767 / BCRC 21394 / JCM 1990 / NBRC 0083 / IGC 2968)</name>
    <name type="common">Yeast</name>
    <name type="synonym">Torulaspora hansenii</name>
    <dbReference type="NCBI Taxonomy" id="284592"/>
    <lineage>
        <taxon>Eukaryota</taxon>
        <taxon>Fungi</taxon>
        <taxon>Dikarya</taxon>
        <taxon>Ascomycota</taxon>
        <taxon>Saccharomycotina</taxon>
        <taxon>Pichiomycetes</taxon>
        <taxon>Debaryomycetaceae</taxon>
        <taxon>Debaryomyces</taxon>
    </lineage>
</organism>
<keyword id="KW-0963">Cytoplasm</keyword>
<keyword id="KW-0328">Glycosyltransferase</keyword>
<keyword id="KW-0460">Magnesium</keyword>
<keyword id="KW-0479">Metal-binding</keyword>
<keyword id="KW-0539">Nucleus</keyword>
<keyword id="KW-0660">Purine salvage</keyword>
<keyword id="KW-1185">Reference proteome</keyword>
<keyword id="KW-0808">Transferase</keyword>